<accession>C6C1B1</accession>
<sequence length="346" mass="39267">MLIQDGDKLINTRNWAELVKPEQLVRDPKSNELYGKFICEPLERGFGTTIGNSLRRVLLSSMQGAAAVAVKIEGVQHEFTTIEGVMEDVTEIVLNIKQIRFAMTTDEPQFLTLRVNKQGVVTAADIQENQNVKVLNPEQIIATLSEKMDMEMTFEIRMGKGYVPADMHEGLVNEIGHIILDSSFSPIRKVAYSVEQARVGQMTNYDKLIIEVFTDGSVTPEDAIAYSAKILKDQLSVFINFDEMGSEQEESKESDLDLNPNLFKSIDELELSVRATNCLKAANIRIVGELVQRTEQTMLKTKNFGRKSLDEIRRVLDSMELKFGMVLEDFDKKHQEWLKRKEKNEA</sequence>
<proteinExistence type="inferred from homology"/>
<comment type="function">
    <text evidence="1">DNA-dependent RNA polymerase catalyzes the transcription of DNA into RNA using the four ribonucleoside triphosphates as substrates.</text>
</comment>
<comment type="catalytic activity">
    <reaction evidence="1">
        <text>RNA(n) + a ribonucleoside 5'-triphosphate = RNA(n+1) + diphosphate</text>
        <dbReference type="Rhea" id="RHEA:21248"/>
        <dbReference type="Rhea" id="RHEA-COMP:14527"/>
        <dbReference type="Rhea" id="RHEA-COMP:17342"/>
        <dbReference type="ChEBI" id="CHEBI:33019"/>
        <dbReference type="ChEBI" id="CHEBI:61557"/>
        <dbReference type="ChEBI" id="CHEBI:140395"/>
        <dbReference type="EC" id="2.7.7.6"/>
    </reaction>
</comment>
<comment type="subunit">
    <text evidence="1">Homodimer. The RNAP catalytic core consists of 2 alpha, 1 beta, 1 beta' and 1 omega subunit. When a sigma factor is associated with the core the holoenzyme is formed, which can initiate transcription.</text>
</comment>
<comment type="domain">
    <text evidence="1">The N-terminal domain is essential for RNAP assembly and basal transcription, whereas the C-terminal domain is involved in interaction with transcriptional regulators and with upstream promoter elements.</text>
</comment>
<comment type="similarity">
    <text evidence="1">Belongs to the RNA polymerase alpha chain family.</text>
</comment>
<name>RPOA_MARSD</name>
<keyword id="KW-0240">DNA-directed RNA polymerase</keyword>
<keyword id="KW-0548">Nucleotidyltransferase</keyword>
<keyword id="KW-1185">Reference proteome</keyword>
<keyword id="KW-0804">Transcription</keyword>
<keyword id="KW-0808">Transferase</keyword>
<gene>
    <name evidence="1" type="primary">rpoA</name>
    <name type="ordered locus">Desal_1211</name>
</gene>
<organism>
    <name type="scientific">Maridesulfovibrio salexigens (strain ATCC 14822 / DSM 2638 / NCIMB 8403 / VKM B-1763)</name>
    <name type="common">Desulfovibrio salexigens</name>
    <dbReference type="NCBI Taxonomy" id="526222"/>
    <lineage>
        <taxon>Bacteria</taxon>
        <taxon>Pseudomonadati</taxon>
        <taxon>Thermodesulfobacteriota</taxon>
        <taxon>Desulfovibrionia</taxon>
        <taxon>Desulfovibrionales</taxon>
        <taxon>Desulfovibrionaceae</taxon>
        <taxon>Maridesulfovibrio</taxon>
    </lineage>
</organism>
<feature type="chain" id="PRO_1000202353" description="DNA-directed RNA polymerase subunit alpha">
    <location>
        <begin position="1"/>
        <end position="346"/>
    </location>
</feature>
<feature type="region of interest" description="Alpha N-terminal domain (alpha-NTD)" evidence="1">
    <location>
        <begin position="1"/>
        <end position="242"/>
    </location>
</feature>
<feature type="region of interest" description="Alpha C-terminal domain (alpha-CTD)" evidence="1">
    <location>
        <begin position="258"/>
        <end position="346"/>
    </location>
</feature>
<protein>
    <recommendedName>
        <fullName evidence="1">DNA-directed RNA polymerase subunit alpha</fullName>
        <shortName evidence="1">RNAP subunit alpha</shortName>
        <ecNumber evidence="1">2.7.7.6</ecNumber>
    </recommendedName>
    <alternativeName>
        <fullName evidence="1">RNA polymerase subunit alpha</fullName>
    </alternativeName>
    <alternativeName>
        <fullName evidence="1">Transcriptase subunit alpha</fullName>
    </alternativeName>
</protein>
<evidence type="ECO:0000255" key="1">
    <source>
        <dbReference type="HAMAP-Rule" id="MF_00059"/>
    </source>
</evidence>
<reference key="1">
    <citation type="submission" date="2009-06" db="EMBL/GenBank/DDBJ databases">
        <title>Complete sequence of Desulfovibrio salexigens DSM 2638.</title>
        <authorList>
            <consortium name="US DOE Joint Genome Institute"/>
            <person name="Lucas S."/>
            <person name="Copeland A."/>
            <person name="Lapidus A."/>
            <person name="Glavina del Rio T."/>
            <person name="Tice H."/>
            <person name="Bruce D."/>
            <person name="Goodwin L."/>
            <person name="Pitluck S."/>
            <person name="Munk A.C."/>
            <person name="Brettin T."/>
            <person name="Detter J.C."/>
            <person name="Han C."/>
            <person name="Tapia R."/>
            <person name="Larimer F."/>
            <person name="Land M."/>
            <person name="Hauser L."/>
            <person name="Kyrpides N."/>
            <person name="Anderson I."/>
            <person name="Wall J.D."/>
            <person name="Arkin A.P."/>
            <person name="Dehal P."/>
            <person name="Chivian D."/>
            <person name="Giles B."/>
            <person name="Hazen T.C."/>
        </authorList>
    </citation>
    <scope>NUCLEOTIDE SEQUENCE [LARGE SCALE GENOMIC DNA]</scope>
    <source>
        <strain>ATCC 14822 / DSM 2638 / NCIMB 8403 / VKM B-1763</strain>
    </source>
</reference>
<dbReference type="EC" id="2.7.7.6" evidence="1"/>
<dbReference type="EMBL" id="CP001649">
    <property type="protein sequence ID" value="ACS79274.1"/>
    <property type="molecule type" value="Genomic_DNA"/>
</dbReference>
<dbReference type="RefSeq" id="WP_015851092.1">
    <property type="nucleotide sequence ID" value="NC_012881.1"/>
</dbReference>
<dbReference type="SMR" id="C6C1B1"/>
<dbReference type="STRING" id="526222.Desal_1211"/>
<dbReference type="KEGG" id="dsa:Desal_1211"/>
<dbReference type="eggNOG" id="COG0202">
    <property type="taxonomic scope" value="Bacteria"/>
</dbReference>
<dbReference type="HOGENOM" id="CLU_053084_0_1_7"/>
<dbReference type="OrthoDB" id="9805706at2"/>
<dbReference type="Proteomes" id="UP000002601">
    <property type="component" value="Chromosome"/>
</dbReference>
<dbReference type="GO" id="GO:0005737">
    <property type="term" value="C:cytoplasm"/>
    <property type="evidence" value="ECO:0007669"/>
    <property type="project" value="UniProtKB-ARBA"/>
</dbReference>
<dbReference type="GO" id="GO:0000428">
    <property type="term" value="C:DNA-directed RNA polymerase complex"/>
    <property type="evidence" value="ECO:0007669"/>
    <property type="project" value="UniProtKB-KW"/>
</dbReference>
<dbReference type="GO" id="GO:0003677">
    <property type="term" value="F:DNA binding"/>
    <property type="evidence" value="ECO:0007669"/>
    <property type="project" value="UniProtKB-UniRule"/>
</dbReference>
<dbReference type="GO" id="GO:0003899">
    <property type="term" value="F:DNA-directed RNA polymerase activity"/>
    <property type="evidence" value="ECO:0007669"/>
    <property type="project" value="UniProtKB-UniRule"/>
</dbReference>
<dbReference type="GO" id="GO:0046983">
    <property type="term" value="F:protein dimerization activity"/>
    <property type="evidence" value="ECO:0007669"/>
    <property type="project" value="InterPro"/>
</dbReference>
<dbReference type="GO" id="GO:0006351">
    <property type="term" value="P:DNA-templated transcription"/>
    <property type="evidence" value="ECO:0007669"/>
    <property type="project" value="UniProtKB-UniRule"/>
</dbReference>
<dbReference type="CDD" id="cd06928">
    <property type="entry name" value="RNAP_alpha_NTD"/>
    <property type="match status" value="1"/>
</dbReference>
<dbReference type="FunFam" id="1.10.150.20:FF:000001">
    <property type="entry name" value="DNA-directed RNA polymerase subunit alpha"/>
    <property type="match status" value="1"/>
</dbReference>
<dbReference type="FunFam" id="2.170.120.12:FF:000001">
    <property type="entry name" value="DNA-directed RNA polymerase subunit alpha"/>
    <property type="match status" value="1"/>
</dbReference>
<dbReference type="Gene3D" id="1.10.150.20">
    <property type="entry name" value="5' to 3' exonuclease, C-terminal subdomain"/>
    <property type="match status" value="1"/>
</dbReference>
<dbReference type="Gene3D" id="2.170.120.12">
    <property type="entry name" value="DNA-directed RNA polymerase, insert domain"/>
    <property type="match status" value="1"/>
</dbReference>
<dbReference type="Gene3D" id="3.30.1360.10">
    <property type="entry name" value="RNA polymerase, RBP11-like subunit"/>
    <property type="match status" value="1"/>
</dbReference>
<dbReference type="HAMAP" id="MF_00059">
    <property type="entry name" value="RNApol_bact_RpoA"/>
    <property type="match status" value="1"/>
</dbReference>
<dbReference type="InterPro" id="IPR011262">
    <property type="entry name" value="DNA-dir_RNA_pol_insert"/>
</dbReference>
<dbReference type="InterPro" id="IPR011263">
    <property type="entry name" value="DNA-dir_RNA_pol_RpoA/D/Rpb3"/>
</dbReference>
<dbReference type="InterPro" id="IPR011773">
    <property type="entry name" value="DNA-dir_RpoA"/>
</dbReference>
<dbReference type="InterPro" id="IPR036603">
    <property type="entry name" value="RBP11-like"/>
</dbReference>
<dbReference type="InterPro" id="IPR011260">
    <property type="entry name" value="RNAP_asu_C"/>
</dbReference>
<dbReference type="InterPro" id="IPR036643">
    <property type="entry name" value="RNApol_insert_sf"/>
</dbReference>
<dbReference type="NCBIfam" id="NF003513">
    <property type="entry name" value="PRK05182.1-2"/>
    <property type="match status" value="1"/>
</dbReference>
<dbReference type="NCBIfam" id="NF003519">
    <property type="entry name" value="PRK05182.2-5"/>
    <property type="match status" value="1"/>
</dbReference>
<dbReference type="NCBIfam" id="TIGR02027">
    <property type="entry name" value="rpoA"/>
    <property type="match status" value="1"/>
</dbReference>
<dbReference type="Pfam" id="PF01000">
    <property type="entry name" value="RNA_pol_A_bac"/>
    <property type="match status" value="1"/>
</dbReference>
<dbReference type="Pfam" id="PF03118">
    <property type="entry name" value="RNA_pol_A_CTD"/>
    <property type="match status" value="1"/>
</dbReference>
<dbReference type="Pfam" id="PF01193">
    <property type="entry name" value="RNA_pol_L"/>
    <property type="match status" value="1"/>
</dbReference>
<dbReference type="SMART" id="SM00662">
    <property type="entry name" value="RPOLD"/>
    <property type="match status" value="1"/>
</dbReference>
<dbReference type="SUPFAM" id="SSF47789">
    <property type="entry name" value="C-terminal domain of RNA polymerase alpha subunit"/>
    <property type="match status" value="1"/>
</dbReference>
<dbReference type="SUPFAM" id="SSF56553">
    <property type="entry name" value="Insert subdomain of RNA polymerase alpha subunit"/>
    <property type="match status" value="1"/>
</dbReference>
<dbReference type="SUPFAM" id="SSF55257">
    <property type="entry name" value="RBP11-like subunits of RNA polymerase"/>
    <property type="match status" value="1"/>
</dbReference>